<reference key="1">
    <citation type="journal article" date="2014" name="Stand. Genomic Sci.">
        <title>Complete genome sequence of Anabaena variabilis ATCC 29413.</title>
        <authorList>
            <person name="Thiel T."/>
            <person name="Pratte B.S."/>
            <person name="Zhong J."/>
            <person name="Goodwin L."/>
            <person name="Copeland A."/>
            <person name="Lucas S."/>
            <person name="Han C."/>
            <person name="Pitluck S."/>
            <person name="Land M.L."/>
            <person name="Kyrpides N.C."/>
            <person name="Woyke T."/>
        </authorList>
    </citation>
    <scope>NUCLEOTIDE SEQUENCE [LARGE SCALE GENOMIC DNA]</scope>
    <source>
        <strain>ATCC 29413 / PCC 7937</strain>
    </source>
</reference>
<keyword id="KW-0030">Aminoacyl-tRNA synthetase</keyword>
<keyword id="KW-0067">ATP-binding</keyword>
<keyword id="KW-0963">Cytoplasm</keyword>
<keyword id="KW-0436">Ligase</keyword>
<keyword id="KW-0547">Nucleotide-binding</keyword>
<keyword id="KW-0648">Protein biosynthesis</keyword>
<comment type="function">
    <text evidence="1">Catalyzes the attachment of glutamate to tRNA(Glu) in a two-step reaction: glutamate is first activated by ATP to form Glu-AMP and then transferred to the acceptor end of tRNA(Glu).</text>
</comment>
<comment type="catalytic activity">
    <reaction evidence="1">
        <text>tRNA(Glu) + L-glutamate + ATP = L-glutamyl-tRNA(Glu) + AMP + diphosphate</text>
        <dbReference type="Rhea" id="RHEA:23540"/>
        <dbReference type="Rhea" id="RHEA-COMP:9663"/>
        <dbReference type="Rhea" id="RHEA-COMP:9680"/>
        <dbReference type="ChEBI" id="CHEBI:29985"/>
        <dbReference type="ChEBI" id="CHEBI:30616"/>
        <dbReference type="ChEBI" id="CHEBI:33019"/>
        <dbReference type="ChEBI" id="CHEBI:78442"/>
        <dbReference type="ChEBI" id="CHEBI:78520"/>
        <dbReference type="ChEBI" id="CHEBI:456215"/>
        <dbReference type="EC" id="6.1.1.17"/>
    </reaction>
</comment>
<comment type="subunit">
    <text evidence="1">Monomer.</text>
</comment>
<comment type="subcellular location">
    <subcellularLocation>
        <location evidence="1">Cytoplasm</location>
    </subcellularLocation>
</comment>
<comment type="similarity">
    <text evidence="1">Belongs to the class-I aminoacyl-tRNA synthetase family. Glutamate--tRNA ligase type 1 subfamily.</text>
</comment>
<protein>
    <recommendedName>
        <fullName evidence="1">Glutamate--tRNA ligase</fullName>
        <ecNumber evidence="1">6.1.1.17</ecNumber>
    </recommendedName>
    <alternativeName>
        <fullName evidence="1">Glutamyl-tRNA synthetase</fullName>
        <shortName evidence="1">GluRS</shortName>
    </alternativeName>
</protein>
<feature type="chain" id="PRO_0000237335" description="Glutamate--tRNA ligase">
    <location>
        <begin position="1"/>
        <end position="481"/>
    </location>
</feature>
<feature type="short sequence motif" description="'HIGH' region" evidence="1">
    <location>
        <begin position="9"/>
        <end position="19"/>
    </location>
</feature>
<feature type="short sequence motif" description="'KMSKS' region" evidence="1">
    <location>
        <begin position="247"/>
        <end position="251"/>
    </location>
</feature>
<feature type="binding site" evidence="1">
    <location>
        <position position="250"/>
    </location>
    <ligand>
        <name>ATP</name>
        <dbReference type="ChEBI" id="CHEBI:30616"/>
    </ligand>
</feature>
<proteinExistence type="inferred from homology"/>
<name>SYE_TRIV2</name>
<sequence>MTVRVRIAPSPTGNLHIGTARTAVFNWLFARHHGGTFILRIEDTDLERSRPEYTENIMTGLRWLGLNWDEGPFFQSQRLDLYQKAVKQLLDQGLAYRCYTTSEELEALREAQKAKGEAPRYDNRHRHLTPEQEAEFKAQGRSFVIRFKIDDEREIVWNDLVRGKMSWRGSDLGGDMVIARASENDTGQPLYNFVVVIDDIDMQISHVIRGEDHIANTAKQILLYEAFGAKIPEFAHTPLILNMEGRKLSKRDGVTSISDFQQMGFTSEGLVNYMTLLGWSPPDSTQEIFTLEAAAKEFTFERVNKAGAKFDWAKLDWLNSQYIHNTPVDQLTDLLIPYWEAAGYSFAGGRDRPWLEQLVGLLSASLTRLTDAVDMSKLFFSETVELSEEGSKQLQQEGSKAVLEAIIAALEAQTQLTENAAQDIIKQVVKAQNVKKGLVMRSLRVALTGDVHGPDLIQSWLLLNQIGLDKPRLSQAIAASL</sequence>
<accession>Q3M3H8</accession>
<dbReference type="EC" id="6.1.1.17" evidence="1"/>
<dbReference type="EMBL" id="CP000117">
    <property type="protein sequence ID" value="ABA24458.1"/>
    <property type="molecule type" value="Genomic_DNA"/>
</dbReference>
<dbReference type="SMR" id="Q3M3H8"/>
<dbReference type="STRING" id="240292.Ava_4861"/>
<dbReference type="KEGG" id="ava:Ava_4861"/>
<dbReference type="eggNOG" id="COG0008">
    <property type="taxonomic scope" value="Bacteria"/>
</dbReference>
<dbReference type="HOGENOM" id="CLU_015768_6_0_3"/>
<dbReference type="Proteomes" id="UP000002533">
    <property type="component" value="Chromosome"/>
</dbReference>
<dbReference type="GO" id="GO:0005829">
    <property type="term" value="C:cytosol"/>
    <property type="evidence" value="ECO:0007669"/>
    <property type="project" value="TreeGrafter"/>
</dbReference>
<dbReference type="GO" id="GO:0005524">
    <property type="term" value="F:ATP binding"/>
    <property type="evidence" value="ECO:0007669"/>
    <property type="project" value="UniProtKB-UniRule"/>
</dbReference>
<dbReference type="GO" id="GO:0004818">
    <property type="term" value="F:glutamate-tRNA ligase activity"/>
    <property type="evidence" value="ECO:0007669"/>
    <property type="project" value="UniProtKB-UniRule"/>
</dbReference>
<dbReference type="GO" id="GO:0000049">
    <property type="term" value="F:tRNA binding"/>
    <property type="evidence" value="ECO:0007669"/>
    <property type="project" value="InterPro"/>
</dbReference>
<dbReference type="GO" id="GO:0008270">
    <property type="term" value="F:zinc ion binding"/>
    <property type="evidence" value="ECO:0007669"/>
    <property type="project" value="InterPro"/>
</dbReference>
<dbReference type="GO" id="GO:0006424">
    <property type="term" value="P:glutamyl-tRNA aminoacylation"/>
    <property type="evidence" value="ECO:0007669"/>
    <property type="project" value="UniProtKB-UniRule"/>
</dbReference>
<dbReference type="CDD" id="cd00808">
    <property type="entry name" value="GluRS_core"/>
    <property type="match status" value="1"/>
</dbReference>
<dbReference type="FunFam" id="3.40.50.620:FF:000007">
    <property type="entry name" value="Glutamate--tRNA ligase"/>
    <property type="match status" value="1"/>
</dbReference>
<dbReference type="Gene3D" id="1.10.10.350">
    <property type="match status" value="1"/>
</dbReference>
<dbReference type="Gene3D" id="1.10.8.70">
    <property type="entry name" value="Glutamate-tRNA synthetase, class I, anticodon-binding domain 1"/>
    <property type="match status" value="1"/>
</dbReference>
<dbReference type="Gene3D" id="1.10.1160.10">
    <property type="entry name" value="Glutamyl-trna Synthetase, Domain 2"/>
    <property type="match status" value="1"/>
</dbReference>
<dbReference type="Gene3D" id="3.90.800.10">
    <property type="entry name" value="Glutamyl-tRNA Synthetase, Domain 3"/>
    <property type="match status" value="1"/>
</dbReference>
<dbReference type="Gene3D" id="3.40.50.620">
    <property type="entry name" value="HUPs"/>
    <property type="match status" value="1"/>
</dbReference>
<dbReference type="HAMAP" id="MF_00022">
    <property type="entry name" value="Glu_tRNA_synth_type1"/>
    <property type="match status" value="1"/>
</dbReference>
<dbReference type="InterPro" id="IPR045462">
    <property type="entry name" value="aa-tRNA-synth_I_cd-bd"/>
</dbReference>
<dbReference type="InterPro" id="IPR020751">
    <property type="entry name" value="aa-tRNA-synth_I_codon-bd_sub2"/>
</dbReference>
<dbReference type="InterPro" id="IPR001412">
    <property type="entry name" value="aa-tRNA-synth_I_CS"/>
</dbReference>
<dbReference type="InterPro" id="IPR008925">
    <property type="entry name" value="aa_tRNA-synth_I_cd-bd_sf"/>
</dbReference>
<dbReference type="InterPro" id="IPR004527">
    <property type="entry name" value="Glu-tRNA-ligase_bac/mito"/>
</dbReference>
<dbReference type="InterPro" id="IPR020752">
    <property type="entry name" value="Glu-tRNA-synth_I_codon-bd_sub1"/>
</dbReference>
<dbReference type="InterPro" id="IPR000924">
    <property type="entry name" value="Glu/Gln-tRNA-synth"/>
</dbReference>
<dbReference type="InterPro" id="IPR020058">
    <property type="entry name" value="Glu/Gln-tRNA-synth_Ib_cat-dom"/>
</dbReference>
<dbReference type="InterPro" id="IPR020061">
    <property type="entry name" value="Glu_tRNA_lig_a-bdl"/>
</dbReference>
<dbReference type="InterPro" id="IPR049940">
    <property type="entry name" value="GluQ/Sye"/>
</dbReference>
<dbReference type="InterPro" id="IPR033910">
    <property type="entry name" value="GluRS_core"/>
</dbReference>
<dbReference type="InterPro" id="IPR014729">
    <property type="entry name" value="Rossmann-like_a/b/a_fold"/>
</dbReference>
<dbReference type="NCBIfam" id="TIGR00464">
    <property type="entry name" value="gltX_bact"/>
    <property type="match status" value="1"/>
</dbReference>
<dbReference type="PANTHER" id="PTHR43311">
    <property type="entry name" value="GLUTAMATE--TRNA LIGASE"/>
    <property type="match status" value="1"/>
</dbReference>
<dbReference type="PANTHER" id="PTHR43311:SF2">
    <property type="entry name" value="GLUTAMATE--TRNA LIGASE, MITOCHONDRIAL-RELATED"/>
    <property type="match status" value="1"/>
</dbReference>
<dbReference type="Pfam" id="PF19269">
    <property type="entry name" value="Anticodon_2"/>
    <property type="match status" value="1"/>
</dbReference>
<dbReference type="Pfam" id="PF00749">
    <property type="entry name" value="tRNA-synt_1c"/>
    <property type="match status" value="1"/>
</dbReference>
<dbReference type="PRINTS" id="PR00987">
    <property type="entry name" value="TRNASYNTHGLU"/>
</dbReference>
<dbReference type="SUPFAM" id="SSF48163">
    <property type="entry name" value="An anticodon-binding domain of class I aminoacyl-tRNA synthetases"/>
    <property type="match status" value="1"/>
</dbReference>
<dbReference type="SUPFAM" id="SSF52374">
    <property type="entry name" value="Nucleotidylyl transferase"/>
    <property type="match status" value="1"/>
</dbReference>
<dbReference type="PROSITE" id="PS00178">
    <property type="entry name" value="AA_TRNA_LIGASE_I"/>
    <property type="match status" value="1"/>
</dbReference>
<gene>
    <name evidence="1" type="primary">gltX</name>
    <name type="ordered locus">Ava_4861</name>
</gene>
<organism>
    <name type="scientific">Trichormus variabilis (strain ATCC 29413 / PCC 7937)</name>
    <name type="common">Anabaena variabilis</name>
    <dbReference type="NCBI Taxonomy" id="240292"/>
    <lineage>
        <taxon>Bacteria</taxon>
        <taxon>Bacillati</taxon>
        <taxon>Cyanobacteriota</taxon>
        <taxon>Cyanophyceae</taxon>
        <taxon>Nostocales</taxon>
        <taxon>Nostocaceae</taxon>
        <taxon>Trichormus</taxon>
    </lineage>
</organism>
<evidence type="ECO:0000255" key="1">
    <source>
        <dbReference type="HAMAP-Rule" id="MF_00022"/>
    </source>
</evidence>